<feature type="chain" id="PRO_0000190156" description="Lipid-A-disaccharide synthase">
    <location>
        <begin position="1"/>
        <end position="364"/>
    </location>
</feature>
<organism>
    <name type="scientific">Campylobacter jejuni subsp. jejuni serotype O:2 (strain ATCC 700819 / NCTC 11168)</name>
    <dbReference type="NCBI Taxonomy" id="192222"/>
    <lineage>
        <taxon>Bacteria</taxon>
        <taxon>Pseudomonadati</taxon>
        <taxon>Campylobacterota</taxon>
        <taxon>Epsilonproteobacteria</taxon>
        <taxon>Campylobacterales</taxon>
        <taxon>Campylobacteraceae</taxon>
        <taxon>Campylobacter</taxon>
    </lineage>
</organism>
<proteinExistence type="inferred from homology"/>
<protein>
    <recommendedName>
        <fullName>Lipid-A-disaccharide synthase</fullName>
        <ecNumber>2.4.1.182</ecNumber>
    </recommendedName>
</protein>
<sequence>MKTFLVCALEPSANLHLKEVLKAYKKDFGEFELHGIYDESLCKEFDLNSKPLYSSHEFSAMGFIEVLPLIFKAKKAIKELANLSFTQKINGILCIDSPAFNIPFAKALKKAGSKIPRIYYILPQVWAWKKGRIPIIESHFDILASILPFDNQFFNKSTYIGHPLLDEIKEFKNQEDINHTFSKKDDEKTIAFLPGSRRSEIRRLMPIFKELSQKFKGKKILCVPSFNLEKLEVYGDISEFKIESNTPKVLKKADFAFICSGTATLEAALVGTPFVLAYKAKAIDIFIAKLFVKLKHIGLANIFCDFAGKEALNPEFLQDKVNVLNLYEAYNKYDYKAFFAKVDFLKEYLQFGSAKNLAKILNEI</sequence>
<accession>Q9PIK8</accession>
<accession>Q0PBL8</accession>
<keyword id="KW-0328">Glycosyltransferase</keyword>
<keyword id="KW-0441">Lipid A biosynthesis</keyword>
<keyword id="KW-0444">Lipid biosynthesis</keyword>
<keyword id="KW-0443">Lipid metabolism</keyword>
<keyword id="KW-1185">Reference proteome</keyword>
<keyword id="KW-0808">Transferase</keyword>
<evidence type="ECO:0000250" key="1"/>
<evidence type="ECO:0000305" key="2"/>
<reference key="1">
    <citation type="journal article" date="2000" name="Nature">
        <title>The genome sequence of the food-borne pathogen Campylobacter jejuni reveals hypervariable sequences.</title>
        <authorList>
            <person name="Parkhill J."/>
            <person name="Wren B.W."/>
            <person name="Mungall K.L."/>
            <person name="Ketley J.M."/>
            <person name="Churcher C.M."/>
            <person name="Basham D."/>
            <person name="Chillingworth T."/>
            <person name="Davies R.M."/>
            <person name="Feltwell T."/>
            <person name="Holroyd S."/>
            <person name="Jagels K."/>
            <person name="Karlyshev A.V."/>
            <person name="Moule S."/>
            <person name="Pallen M.J."/>
            <person name="Penn C.W."/>
            <person name="Quail M.A."/>
            <person name="Rajandream M.A."/>
            <person name="Rutherford K.M."/>
            <person name="van Vliet A.H.M."/>
            <person name="Whitehead S."/>
            <person name="Barrell B.G."/>
        </authorList>
    </citation>
    <scope>NUCLEOTIDE SEQUENCE [LARGE SCALE GENOMIC DNA]</scope>
    <source>
        <strain>ATCC 700819 / NCTC 11168</strain>
    </source>
</reference>
<dbReference type="EC" id="2.4.1.182"/>
<dbReference type="EMBL" id="AL111168">
    <property type="protein sequence ID" value="CAL34441.1"/>
    <property type="molecule type" value="Genomic_DNA"/>
</dbReference>
<dbReference type="PIR" id="F81447">
    <property type="entry name" value="F81447"/>
</dbReference>
<dbReference type="RefSeq" id="WP_002858730.1">
    <property type="nucleotide sequence ID" value="NZ_SZUC01000004.1"/>
</dbReference>
<dbReference type="RefSeq" id="YP_002343729.1">
    <property type="nucleotide sequence ID" value="NC_002163.1"/>
</dbReference>
<dbReference type="SMR" id="Q9PIK8"/>
<dbReference type="STRING" id="192222.Cj0288c"/>
<dbReference type="CAZy" id="GT19">
    <property type="family name" value="Glycosyltransferase Family 19"/>
</dbReference>
<dbReference type="PaxDb" id="192222-Cj0288c"/>
<dbReference type="EnsemblBacteria" id="CAL34441">
    <property type="protein sequence ID" value="CAL34441"/>
    <property type="gene ID" value="Cj0288c"/>
</dbReference>
<dbReference type="GeneID" id="904612"/>
<dbReference type="KEGG" id="cje:Cj0288c"/>
<dbReference type="PATRIC" id="fig|192222.6.peg.281"/>
<dbReference type="eggNOG" id="COG0763">
    <property type="taxonomic scope" value="Bacteria"/>
</dbReference>
<dbReference type="HOGENOM" id="CLU_036577_3_1_7"/>
<dbReference type="OrthoDB" id="9801642at2"/>
<dbReference type="UniPathway" id="UPA00973"/>
<dbReference type="Proteomes" id="UP000000799">
    <property type="component" value="Chromosome"/>
</dbReference>
<dbReference type="GO" id="GO:0016020">
    <property type="term" value="C:membrane"/>
    <property type="evidence" value="ECO:0007669"/>
    <property type="project" value="GOC"/>
</dbReference>
<dbReference type="GO" id="GO:0008915">
    <property type="term" value="F:lipid-A-disaccharide synthase activity"/>
    <property type="evidence" value="ECO:0007669"/>
    <property type="project" value="UniProtKB-UniRule"/>
</dbReference>
<dbReference type="GO" id="GO:0005543">
    <property type="term" value="F:phospholipid binding"/>
    <property type="evidence" value="ECO:0007669"/>
    <property type="project" value="TreeGrafter"/>
</dbReference>
<dbReference type="GO" id="GO:0009245">
    <property type="term" value="P:lipid A biosynthetic process"/>
    <property type="evidence" value="ECO:0007669"/>
    <property type="project" value="UniProtKB-UniRule"/>
</dbReference>
<dbReference type="HAMAP" id="MF_00392">
    <property type="entry name" value="LpxB"/>
    <property type="match status" value="1"/>
</dbReference>
<dbReference type="InterPro" id="IPR003835">
    <property type="entry name" value="Glyco_trans_19"/>
</dbReference>
<dbReference type="NCBIfam" id="TIGR00215">
    <property type="entry name" value="lpxB"/>
    <property type="match status" value="1"/>
</dbReference>
<dbReference type="PANTHER" id="PTHR30372">
    <property type="entry name" value="LIPID-A-DISACCHARIDE SYNTHASE"/>
    <property type="match status" value="1"/>
</dbReference>
<dbReference type="PANTHER" id="PTHR30372:SF4">
    <property type="entry name" value="LIPID-A-DISACCHARIDE SYNTHASE, MITOCHONDRIAL-RELATED"/>
    <property type="match status" value="1"/>
</dbReference>
<dbReference type="Pfam" id="PF02684">
    <property type="entry name" value="LpxB"/>
    <property type="match status" value="1"/>
</dbReference>
<dbReference type="SUPFAM" id="SSF53756">
    <property type="entry name" value="UDP-Glycosyltransferase/glycogen phosphorylase"/>
    <property type="match status" value="1"/>
</dbReference>
<comment type="function">
    <text evidence="1">Condensation of UDP-2,3-diacylglucosamine and 2,3-diacylglucosamine-1-phosphate to form lipid A disaccharide, a precursor of lipid A, a phosphorylated glycolipid that anchors the lipopolysaccharide to the outer membrane of the cell.</text>
</comment>
<comment type="catalytic activity">
    <reaction>
        <text>a lipid X + a UDP-2-N,3-O-bis[(3R)-3-hydroxyacyl]-alpha-D-glucosamine = a lipid A disaccharide + UDP + H(+)</text>
        <dbReference type="Rhea" id="RHEA:67828"/>
        <dbReference type="ChEBI" id="CHEBI:15378"/>
        <dbReference type="ChEBI" id="CHEBI:58223"/>
        <dbReference type="ChEBI" id="CHEBI:137748"/>
        <dbReference type="ChEBI" id="CHEBI:176338"/>
        <dbReference type="ChEBI" id="CHEBI:176343"/>
        <dbReference type="EC" id="2.4.1.182"/>
    </reaction>
</comment>
<comment type="pathway">
    <text>Bacterial outer membrane biogenesis; LPS lipid A biosynthesis.</text>
</comment>
<comment type="similarity">
    <text evidence="2">Belongs to the LpxB family.</text>
</comment>
<name>LPXB_CAMJE</name>
<gene>
    <name type="primary">lpxB</name>
    <name type="ordered locus">Cj0288c</name>
</gene>